<feature type="signal peptide" evidence="1">
    <location>
        <begin position="1"/>
        <end position="21"/>
    </location>
</feature>
<feature type="chain" id="PRO_0000235185" description="Interleukin-2 receptor subunit alpha">
    <location>
        <begin position="22"/>
        <end position="265" status="greater than"/>
    </location>
</feature>
<feature type="topological domain" description="Extracellular" evidence="3">
    <location>
        <begin position="22"/>
        <end position="240"/>
    </location>
</feature>
<feature type="transmembrane region" description="Helical" evidence="3">
    <location>
        <begin position="241"/>
        <end position="259"/>
    </location>
</feature>
<feature type="topological domain" description="Cytoplasmic" evidence="3">
    <location>
        <begin position="260"/>
        <end position="265" status="greater than"/>
    </location>
</feature>
<feature type="domain" description="Sushi 1" evidence="4">
    <location>
        <begin position="22"/>
        <end position="84"/>
    </location>
</feature>
<feature type="domain" description="Sushi 2" evidence="4">
    <location>
        <begin position="123"/>
        <end position="186"/>
    </location>
</feature>
<feature type="region of interest" description="Disordered" evidence="5">
    <location>
        <begin position="87"/>
        <end position="123"/>
    </location>
</feature>
<feature type="region of interest" description="Disordered" evidence="5">
    <location>
        <begin position="190"/>
        <end position="210"/>
    </location>
</feature>
<feature type="compositionally biased region" description="Polar residues" evidence="5">
    <location>
        <begin position="87"/>
        <end position="98"/>
    </location>
</feature>
<feature type="compositionally biased region" description="Basic and acidic residues" evidence="5">
    <location>
        <begin position="195"/>
        <end position="209"/>
    </location>
</feature>
<feature type="glycosylation site" description="N-linked (GlcNAc...) asparagine" evidence="3">
    <location>
        <position position="70"/>
    </location>
</feature>
<feature type="glycosylation site" description="N-linked (GlcNAc...) asparagine" evidence="3">
    <location>
        <position position="89"/>
    </location>
</feature>
<feature type="disulfide bond" evidence="4">
    <location>
        <begin position="24"/>
        <end position="67"/>
    </location>
</feature>
<feature type="disulfide bond" evidence="4">
    <location>
        <begin position="49"/>
        <end position="80"/>
    </location>
</feature>
<feature type="disulfide bond" evidence="4">
    <location>
        <begin position="51"/>
        <end position="82"/>
    </location>
</feature>
<feature type="disulfide bond" evidence="4">
    <location>
        <begin position="125"/>
        <end position="168"/>
    </location>
</feature>
<feature type="disulfide bond" evidence="4">
    <location>
        <begin position="152"/>
        <end position="184"/>
    </location>
</feature>
<feature type="non-terminal residue">
    <location>
        <position position="265"/>
    </location>
</feature>
<proteinExistence type="evidence at transcript level"/>
<protein>
    <recommendedName>
        <fullName>Interleukin-2 receptor subunit alpha</fullName>
        <shortName>IL-2 receptor subunit alpha</shortName>
        <shortName>IL-2-RA</shortName>
        <shortName>IL-2R subunit alpha</shortName>
        <shortName>IL2-RA</shortName>
    </recommendedName>
    <cdAntigenName>CD25</cdAntigenName>
</protein>
<organism>
    <name type="scientific">Pan troglodytes</name>
    <name type="common">Chimpanzee</name>
    <dbReference type="NCBI Taxonomy" id="9598"/>
    <lineage>
        <taxon>Eukaryota</taxon>
        <taxon>Metazoa</taxon>
        <taxon>Chordata</taxon>
        <taxon>Craniata</taxon>
        <taxon>Vertebrata</taxon>
        <taxon>Euteleostomi</taxon>
        <taxon>Mammalia</taxon>
        <taxon>Eutheria</taxon>
        <taxon>Euarchontoglires</taxon>
        <taxon>Primates</taxon>
        <taxon>Haplorrhini</taxon>
        <taxon>Catarrhini</taxon>
        <taxon>Hominidae</taxon>
        <taxon>Pan</taxon>
    </lineage>
</organism>
<sequence>MDSYLLMWGLLTLIMVPGCFAELCDDDPPEITHATFKAMAYKEGTMLNCECKRGFRRIKSGSLYMLCTGNSSHSSWDNQCQCTSSATRNTTKQVTPQPEEQKERKTTEMQSPMQPVDQASLPGHCREPPPWENEATERIYHFVVGQTVYYQCVQGYRALHRGPAESVCKMTHGKTRWTQPQLICTGEMETSQFPGEEKPQASPEGRPESETSCLITTTDFQIQTEMAATMETFIFTTEYQVAVAGCVFLLISVLLLSGLTWQRRQ</sequence>
<accession>Q38IC8</accession>
<keyword id="KW-1015">Disulfide bond</keyword>
<keyword id="KW-0325">Glycoprotein</keyword>
<keyword id="KW-0391">Immunity</keyword>
<keyword id="KW-0472">Membrane</keyword>
<keyword id="KW-0675">Receptor</keyword>
<keyword id="KW-1185">Reference proteome</keyword>
<keyword id="KW-0677">Repeat</keyword>
<keyword id="KW-0732">Signal</keyword>
<keyword id="KW-0768">Sushi</keyword>
<keyword id="KW-0812">Transmembrane</keyword>
<keyword id="KW-1133">Transmembrane helix</keyword>
<gene>
    <name type="primary">IL2RA</name>
</gene>
<reference key="1">
    <citation type="submission" date="2005-09" db="EMBL/GenBank/DDBJ databases">
        <authorList>
            <person name="Chen S."/>
            <person name="Yu L."/>
        </authorList>
    </citation>
    <scope>NUCLEOTIDE SEQUENCE [MRNA]</scope>
</reference>
<dbReference type="EMBL" id="DQ226542">
    <property type="protein sequence ID" value="ABB13530.1"/>
    <property type="molecule type" value="mRNA"/>
</dbReference>
<dbReference type="RefSeq" id="NP_001030597.1">
    <property type="nucleotide sequence ID" value="NM_001035520.1"/>
</dbReference>
<dbReference type="SMR" id="Q38IC8"/>
<dbReference type="STRING" id="9598.ENSPTRP00000003829"/>
<dbReference type="GlyCosmos" id="Q38IC8">
    <property type="glycosylation" value="2 sites, No reported glycans"/>
</dbReference>
<dbReference type="PaxDb" id="9598-ENSPTRP00000003829"/>
<dbReference type="GeneID" id="450884"/>
<dbReference type="KEGG" id="ptr:450884"/>
<dbReference type="CTD" id="3559"/>
<dbReference type="eggNOG" id="ENOG502SUAG">
    <property type="taxonomic scope" value="Eukaryota"/>
</dbReference>
<dbReference type="InParanoid" id="Q38IC8"/>
<dbReference type="OrthoDB" id="6888at9604"/>
<dbReference type="Proteomes" id="UP000002277">
    <property type="component" value="Unplaced"/>
</dbReference>
<dbReference type="GO" id="GO:0016020">
    <property type="term" value="C:membrane"/>
    <property type="evidence" value="ECO:0007669"/>
    <property type="project" value="UniProtKB-SubCell"/>
</dbReference>
<dbReference type="GO" id="GO:0019976">
    <property type="term" value="F:interleukin-2 binding"/>
    <property type="evidence" value="ECO:0000318"/>
    <property type="project" value="GO_Central"/>
</dbReference>
<dbReference type="GO" id="GO:0004911">
    <property type="term" value="F:interleukin-2 receptor activity"/>
    <property type="evidence" value="ECO:0007669"/>
    <property type="project" value="InterPro"/>
</dbReference>
<dbReference type="GO" id="GO:0002376">
    <property type="term" value="P:immune system process"/>
    <property type="evidence" value="ECO:0007669"/>
    <property type="project" value="UniProtKB-KW"/>
</dbReference>
<dbReference type="GO" id="GO:0006954">
    <property type="term" value="P:inflammatory response"/>
    <property type="evidence" value="ECO:0000318"/>
    <property type="project" value="GO_Central"/>
</dbReference>
<dbReference type="CDD" id="cd00033">
    <property type="entry name" value="CCP"/>
    <property type="match status" value="1"/>
</dbReference>
<dbReference type="FunFam" id="2.20.28.230:FF:000002">
    <property type="entry name" value="Interleukin-2 receptor subunit alpha"/>
    <property type="match status" value="1"/>
</dbReference>
<dbReference type="FunFam" id="2.20.28.230:FF:000003">
    <property type="entry name" value="Interleukin-2 receptor subunit alpha"/>
    <property type="match status" value="1"/>
</dbReference>
<dbReference type="FunFam" id="2.20.28.230:FF:000004">
    <property type="entry name" value="Interleukin-2 receptor subunit alpha"/>
    <property type="match status" value="1"/>
</dbReference>
<dbReference type="Gene3D" id="2.20.28.230">
    <property type="match status" value="2"/>
</dbReference>
<dbReference type="Gene3D" id="2.10.70.10">
    <property type="entry name" value="Complement Module, domain 1"/>
    <property type="match status" value="1"/>
</dbReference>
<dbReference type="InterPro" id="IPR015486">
    <property type="entry name" value="IL-2_rcpt_alpha"/>
</dbReference>
<dbReference type="InterPro" id="IPR035976">
    <property type="entry name" value="Sushi/SCR/CCP_sf"/>
</dbReference>
<dbReference type="InterPro" id="IPR000436">
    <property type="entry name" value="Sushi_SCR_CCP_dom"/>
</dbReference>
<dbReference type="PANTHER" id="PTHR10573">
    <property type="entry name" value="INTERLEUKIN-2 RECEPTOR ALPHA CHAIN"/>
    <property type="match status" value="1"/>
</dbReference>
<dbReference type="PANTHER" id="PTHR10573:SF0">
    <property type="entry name" value="INTERLEUKIN-2 RECEPTOR SUBUNIT ALPHA"/>
    <property type="match status" value="1"/>
</dbReference>
<dbReference type="Pfam" id="PF00084">
    <property type="entry name" value="Sushi"/>
    <property type="match status" value="2"/>
</dbReference>
<dbReference type="SMART" id="SM00032">
    <property type="entry name" value="CCP"/>
    <property type="match status" value="2"/>
</dbReference>
<dbReference type="SUPFAM" id="SSF57535">
    <property type="entry name" value="Complement control module/SCR domain"/>
    <property type="match status" value="2"/>
</dbReference>
<dbReference type="PROSITE" id="PS50923">
    <property type="entry name" value="SUSHI"/>
    <property type="match status" value="2"/>
</dbReference>
<name>IL2RA_PANTR</name>
<comment type="function">
    <text evidence="2">Receptor for interleukin-2. The receptor is involved in the regulation of immune tolerance by controlling regulatory T cells (TREGs) activity. TREGs suppress the activation and expansion of autoreactive T-cells.</text>
</comment>
<comment type="subunit">
    <text evidence="1">Non-covalent dimer of an alpha and a beta subunit. IL2R exists in 3 different forms: a high affinity dimer, an intermediate affinity monomer (beta subunit), and a low affinity monomer (alpha subunit). The high and intermediate affinity forms also associate with a gamma subunit (By similarity).</text>
</comment>
<comment type="subcellular location">
    <subcellularLocation>
        <location evidence="1">Membrane</location>
        <topology evidence="1">Single-pass type I membrane protein</topology>
    </subcellularLocation>
</comment>
<evidence type="ECO:0000250" key="1"/>
<evidence type="ECO:0000250" key="2">
    <source>
        <dbReference type="UniProtKB" id="P01589"/>
    </source>
</evidence>
<evidence type="ECO:0000255" key="3"/>
<evidence type="ECO:0000255" key="4">
    <source>
        <dbReference type="PROSITE-ProRule" id="PRU00302"/>
    </source>
</evidence>
<evidence type="ECO:0000256" key="5">
    <source>
        <dbReference type="SAM" id="MobiDB-lite"/>
    </source>
</evidence>